<reference key="1">
    <citation type="submission" date="2003-10" db="EMBL/GenBank/DDBJ databases">
        <title>The complete genome sequence of the alkaliphilic Bacillus clausii KSM-K16.</title>
        <authorList>
            <person name="Takaki Y."/>
            <person name="Kageyama Y."/>
            <person name="Shimamura S."/>
            <person name="Suzuki H."/>
            <person name="Nishi S."/>
            <person name="Hatada Y."/>
            <person name="Kawai S."/>
            <person name="Ito S."/>
            <person name="Horikoshi K."/>
        </authorList>
    </citation>
    <scope>NUCLEOTIDE SEQUENCE [LARGE SCALE GENOMIC DNA]</scope>
    <source>
        <strain>KSM-K16</strain>
    </source>
</reference>
<accession>Q5WJP5</accession>
<evidence type="ECO:0000255" key="1">
    <source>
        <dbReference type="HAMAP-Rule" id="MF_01445"/>
    </source>
</evidence>
<name>TSAD_SHOC1</name>
<sequence length="335" mass="35422">MTTILAIETSCDETAAAVIENGDTIRSNVVATQMESHARFGGVVPEIASRHHVEVVTAVVEEALEKAKVTYQDLTAVAVTEGPGLVGALLVGIHAAKAIAFAHGLPLIGVHHIAGHIYANQLVAKLQFPLLALVVSGGHTELIYMEKDGQFQVIGQTRDDAVGEAYDKVARALALPYPGGPNVEQLADTAEATLDLPRSWLEKDSYDFSFSGLKSAVLNRLNNDKQRGIVTDRAALAKGFQESVVDVLVAKTVRAQAQFNVKQVVLAGGVAANKGLRKALTEAFANKDVTLLVPPLSLCTDNAAMIGACAHSMWLRGIAGNMAMNARPGLPLSSF</sequence>
<proteinExistence type="inferred from homology"/>
<dbReference type="EC" id="2.3.1.234" evidence="1"/>
<dbReference type="EMBL" id="AP006627">
    <property type="protein sequence ID" value="BAD63410.1"/>
    <property type="molecule type" value="Genomic_DNA"/>
</dbReference>
<dbReference type="RefSeq" id="WP_011245726.1">
    <property type="nucleotide sequence ID" value="NC_006582.1"/>
</dbReference>
<dbReference type="SMR" id="Q5WJP5"/>
<dbReference type="STRING" id="66692.ABC0871"/>
<dbReference type="KEGG" id="bcl:ABC0871"/>
<dbReference type="eggNOG" id="COG0533">
    <property type="taxonomic scope" value="Bacteria"/>
</dbReference>
<dbReference type="HOGENOM" id="CLU_023208_0_2_9"/>
<dbReference type="OrthoDB" id="9806197at2"/>
<dbReference type="Proteomes" id="UP000001168">
    <property type="component" value="Chromosome"/>
</dbReference>
<dbReference type="GO" id="GO:0005737">
    <property type="term" value="C:cytoplasm"/>
    <property type="evidence" value="ECO:0007669"/>
    <property type="project" value="UniProtKB-SubCell"/>
</dbReference>
<dbReference type="GO" id="GO:0005506">
    <property type="term" value="F:iron ion binding"/>
    <property type="evidence" value="ECO:0007669"/>
    <property type="project" value="UniProtKB-UniRule"/>
</dbReference>
<dbReference type="GO" id="GO:0061711">
    <property type="term" value="F:N(6)-L-threonylcarbamoyladenine synthase activity"/>
    <property type="evidence" value="ECO:0007669"/>
    <property type="project" value="UniProtKB-EC"/>
</dbReference>
<dbReference type="GO" id="GO:0002949">
    <property type="term" value="P:tRNA threonylcarbamoyladenosine modification"/>
    <property type="evidence" value="ECO:0007669"/>
    <property type="project" value="UniProtKB-UniRule"/>
</dbReference>
<dbReference type="CDD" id="cd24133">
    <property type="entry name" value="ASKHA_NBD_TsaD_bac"/>
    <property type="match status" value="1"/>
</dbReference>
<dbReference type="FunFam" id="3.30.420.40:FF:000012">
    <property type="entry name" value="tRNA N6-adenosine threonylcarbamoyltransferase"/>
    <property type="match status" value="1"/>
</dbReference>
<dbReference type="FunFam" id="3.30.420.40:FF:000040">
    <property type="entry name" value="tRNA N6-adenosine threonylcarbamoyltransferase"/>
    <property type="match status" value="1"/>
</dbReference>
<dbReference type="Gene3D" id="3.30.420.40">
    <property type="match status" value="2"/>
</dbReference>
<dbReference type="HAMAP" id="MF_01445">
    <property type="entry name" value="TsaD"/>
    <property type="match status" value="1"/>
</dbReference>
<dbReference type="InterPro" id="IPR043129">
    <property type="entry name" value="ATPase_NBD"/>
</dbReference>
<dbReference type="InterPro" id="IPR000905">
    <property type="entry name" value="Gcp-like_dom"/>
</dbReference>
<dbReference type="InterPro" id="IPR017861">
    <property type="entry name" value="KAE1/TsaD"/>
</dbReference>
<dbReference type="InterPro" id="IPR017860">
    <property type="entry name" value="Peptidase_M22_CS"/>
</dbReference>
<dbReference type="InterPro" id="IPR022450">
    <property type="entry name" value="TsaD"/>
</dbReference>
<dbReference type="NCBIfam" id="TIGR00329">
    <property type="entry name" value="gcp_kae1"/>
    <property type="match status" value="1"/>
</dbReference>
<dbReference type="NCBIfam" id="TIGR03723">
    <property type="entry name" value="T6A_TsaD_YgjD"/>
    <property type="match status" value="1"/>
</dbReference>
<dbReference type="PANTHER" id="PTHR11735">
    <property type="entry name" value="TRNA N6-ADENOSINE THREONYLCARBAMOYLTRANSFERASE"/>
    <property type="match status" value="1"/>
</dbReference>
<dbReference type="PANTHER" id="PTHR11735:SF6">
    <property type="entry name" value="TRNA N6-ADENOSINE THREONYLCARBAMOYLTRANSFERASE, MITOCHONDRIAL"/>
    <property type="match status" value="1"/>
</dbReference>
<dbReference type="Pfam" id="PF00814">
    <property type="entry name" value="TsaD"/>
    <property type="match status" value="1"/>
</dbReference>
<dbReference type="PRINTS" id="PR00789">
    <property type="entry name" value="OSIALOPTASE"/>
</dbReference>
<dbReference type="SUPFAM" id="SSF53067">
    <property type="entry name" value="Actin-like ATPase domain"/>
    <property type="match status" value="1"/>
</dbReference>
<dbReference type="PROSITE" id="PS01016">
    <property type="entry name" value="GLYCOPROTEASE"/>
    <property type="match status" value="1"/>
</dbReference>
<gene>
    <name evidence="1" type="primary">tsaD</name>
    <name type="synonym">gcp</name>
    <name type="ordered locus">ABC0871</name>
</gene>
<keyword id="KW-0012">Acyltransferase</keyword>
<keyword id="KW-0963">Cytoplasm</keyword>
<keyword id="KW-0408">Iron</keyword>
<keyword id="KW-0479">Metal-binding</keyword>
<keyword id="KW-1185">Reference proteome</keyword>
<keyword id="KW-0808">Transferase</keyword>
<keyword id="KW-0819">tRNA processing</keyword>
<comment type="function">
    <text evidence="1">Required for the formation of a threonylcarbamoyl group on adenosine at position 37 (t(6)A37) in tRNAs that read codons beginning with adenine. Is involved in the transfer of the threonylcarbamoyl moiety of threonylcarbamoyl-AMP (TC-AMP) to the N6 group of A37, together with TsaE and TsaB. TsaD likely plays a direct catalytic role in this reaction.</text>
</comment>
<comment type="catalytic activity">
    <reaction evidence="1">
        <text>L-threonylcarbamoyladenylate + adenosine(37) in tRNA = N(6)-L-threonylcarbamoyladenosine(37) in tRNA + AMP + H(+)</text>
        <dbReference type="Rhea" id="RHEA:37059"/>
        <dbReference type="Rhea" id="RHEA-COMP:10162"/>
        <dbReference type="Rhea" id="RHEA-COMP:10163"/>
        <dbReference type="ChEBI" id="CHEBI:15378"/>
        <dbReference type="ChEBI" id="CHEBI:73682"/>
        <dbReference type="ChEBI" id="CHEBI:74411"/>
        <dbReference type="ChEBI" id="CHEBI:74418"/>
        <dbReference type="ChEBI" id="CHEBI:456215"/>
        <dbReference type="EC" id="2.3.1.234"/>
    </reaction>
</comment>
<comment type="cofactor">
    <cofactor evidence="1">
        <name>Fe(2+)</name>
        <dbReference type="ChEBI" id="CHEBI:29033"/>
    </cofactor>
    <text evidence="1">Binds 1 Fe(2+) ion per subunit.</text>
</comment>
<comment type="subcellular location">
    <subcellularLocation>
        <location evidence="1">Cytoplasm</location>
    </subcellularLocation>
</comment>
<comment type="similarity">
    <text evidence="1">Belongs to the KAE1 / TsaD family.</text>
</comment>
<organism>
    <name type="scientific">Shouchella clausii (strain KSM-K16)</name>
    <name type="common">Alkalihalobacillus clausii</name>
    <dbReference type="NCBI Taxonomy" id="66692"/>
    <lineage>
        <taxon>Bacteria</taxon>
        <taxon>Bacillati</taxon>
        <taxon>Bacillota</taxon>
        <taxon>Bacilli</taxon>
        <taxon>Bacillales</taxon>
        <taxon>Bacillaceae</taxon>
        <taxon>Shouchella</taxon>
    </lineage>
</organism>
<feature type="chain" id="PRO_0000303266" description="tRNA N6-adenosine threonylcarbamoyltransferase">
    <location>
        <begin position="1"/>
        <end position="335"/>
    </location>
</feature>
<feature type="binding site" evidence="1">
    <location>
        <position position="112"/>
    </location>
    <ligand>
        <name>Fe cation</name>
        <dbReference type="ChEBI" id="CHEBI:24875"/>
    </ligand>
</feature>
<feature type="binding site" evidence="1">
    <location>
        <position position="116"/>
    </location>
    <ligand>
        <name>Fe cation</name>
        <dbReference type="ChEBI" id="CHEBI:24875"/>
    </ligand>
</feature>
<feature type="binding site" evidence="1">
    <location>
        <begin position="134"/>
        <end position="138"/>
    </location>
    <ligand>
        <name>substrate</name>
    </ligand>
</feature>
<feature type="binding site" evidence="1">
    <location>
        <position position="167"/>
    </location>
    <ligand>
        <name>substrate</name>
    </ligand>
</feature>
<feature type="binding site" evidence="1">
    <location>
        <position position="180"/>
    </location>
    <ligand>
        <name>substrate</name>
    </ligand>
</feature>
<feature type="binding site" evidence="1">
    <location>
        <position position="273"/>
    </location>
    <ligand>
        <name>substrate</name>
    </ligand>
</feature>
<feature type="binding site" evidence="1">
    <location>
        <position position="301"/>
    </location>
    <ligand>
        <name>Fe cation</name>
        <dbReference type="ChEBI" id="CHEBI:24875"/>
    </ligand>
</feature>
<protein>
    <recommendedName>
        <fullName evidence="1">tRNA N6-adenosine threonylcarbamoyltransferase</fullName>
        <ecNumber evidence="1">2.3.1.234</ecNumber>
    </recommendedName>
    <alternativeName>
        <fullName evidence="1">N6-L-threonylcarbamoyladenine synthase</fullName>
        <shortName evidence="1">t(6)A synthase</shortName>
    </alternativeName>
    <alternativeName>
        <fullName evidence="1">t(6)A37 threonylcarbamoyladenosine biosynthesis protein TsaD</fullName>
    </alternativeName>
    <alternativeName>
        <fullName evidence="1">tRNA threonylcarbamoyladenosine biosynthesis protein TsaD</fullName>
    </alternativeName>
</protein>